<comment type="function">
    <text evidence="1">Putative oxophytodienoate reductase that may be involved in the biosynthesis or metabolism of oxylipin signaling molecules.</text>
</comment>
<comment type="cofactor">
    <cofactor>
        <name>FMN</name>
        <dbReference type="ChEBI" id="CHEBI:58210"/>
    </cofactor>
</comment>
<comment type="similarity">
    <text evidence="2">Belongs to the NADH:flavin oxidoreductase/NADH oxidase family.</text>
</comment>
<protein>
    <recommendedName>
        <fullName>Putative 12-oxophytodienoate reductase 2</fullName>
        <ecNumber>1.3.1.-</ecNumber>
    </recommendedName>
    <alternativeName>
        <fullName>OPDA-reductase 2</fullName>
        <shortName>OsOPR2</shortName>
    </alternativeName>
</protein>
<sequence>MVHAPAKEAIPLLTPYKMGQLELSHRVVLAPLTRCRSYGHVPQPHAAVYYSQRATNGGLLIAEATVISPTAQGYPDTPGIYTQQQIEAWKPIVDAVHRKGALFFLQIWHVGRVSTTDFQPNGQAPISSTDKQITPDDSGMVYSKPRRLRTDEIPQIVDDFRRAARNAIESGFDGVEIHGAHGYLLDQFMKDSANDRTDEYGGNLENRCRFAVEVIDAVVAEVGAHRVGIRLSPFDNYMDCFDSNPVALGSYMVQQLNKHPGFLYCHMVEPGMAIVEGRRKITHGLLPFRKQFNGTFIAAGGYDREEGNKVVADGYADLVAYGRLFLANPDLPRRFELDAPLNRYDRSTFYTQDPVVGYTDYPFLEEIDEESTTTYA</sequence>
<keyword id="KW-0275">Fatty acid biosynthesis</keyword>
<keyword id="KW-0276">Fatty acid metabolism</keyword>
<keyword id="KW-0285">Flavoprotein</keyword>
<keyword id="KW-0288">FMN</keyword>
<keyword id="KW-0444">Lipid biosynthesis</keyword>
<keyword id="KW-0443">Lipid metabolism</keyword>
<keyword id="KW-0521">NADP</keyword>
<keyword id="KW-0560">Oxidoreductase</keyword>
<keyword id="KW-0925">Oxylipin biosynthesis</keyword>
<keyword id="KW-1185">Reference proteome</keyword>
<evidence type="ECO:0000250" key="1"/>
<evidence type="ECO:0000305" key="2"/>
<dbReference type="EC" id="1.3.1.-"/>
<dbReference type="EMBL" id="AP003525">
    <property type="protein sequence ID" value="BAD35325.1"/>
    <property type="molecule type" value="Genomic_DNA"/>
</dbReference>
<dbReference type="EMBL" id="AP004741">
    <property type="protein sequence ID" value="BAD35833.1"/>
    <property type="molecule type" value="Genomic_DNA"/>
</dbReference>
<dbReference type="EMBL" id="AP008212">
    <property type="protein sequence ID" value="BAF19058.1"/>
    <property type="molecule type" value="Genomic_DNA"/>
</dbReference>
<dbReference type="EMBL" id="AP014962">
    <property type="protein sequence ID" value="BAS96787.1"/>
    <property type="molecule type" value="Genomic_DNA"/>
</dbReference>
<dbReference type="EMBL" id="CM000143">
    <property type="protein sequence ID" value="EEE65331.1"/>
    <property type="molecule type" value="Genomic_DNA"/>
</dbReference>
<dbReference type="SMR" id="Q69TH4"/>
<dbReference type="FunCoup" id="Q69TH4">
    <property type="interactions" value="166"/>
</dbReference>
<dbReference type="STRING" id="39947.Q69TH4"/>
<dbReference type="PaxDb" id="39947-Q69TH4"/>
<dbReference type="EnsemblPlants" id="Os06t0216200-00">
    <property type="protein sequence ID" value="Os06t0216200-00"/>
    <property type="gene ID" value="Os06g0216200"/>
</dbReference>
<dbReference type="Gramene" id="Os06t0216200-00">
    <property type="protein sequence ID" value="Os06t0216200-00"/>
    <property type="gene ID" value="Os06g0216200"/>
</dbReference>
<dbReference type="KEGG" id="dosa:Os06g0216200"/>
<dbReference type="eggNOG" id="KOG0134">
    <property type="taxonomic scope" value="Eukaryota"/>
</dbReference>
<dbReference type="HOGENOM" id="CLU_012153_0_0_1"/>
<dbReference type="InParanoid" id="Q69TH4"/>
<dbReference type="OMA" id="DERMCIL"/>
<dbReference type="Proteomes" id="UP000000763">
    <property type="component" value="Chromosome 6"/>
</dbReference>
<dbReference type="Proteomes" id="UP000007752">
    <property type="component" value="Chromosome 6"/>
</dbReference>
<dbReference type="Proteomes" id="UP000059680">
    <property type="component" value="Chromosome 6"/>
</dbReference>
<dbReference type="GO" id="GO:0010181">
    <property type="term" value="F:FMN binding"/>
    <property type="evidence" value="ECO:0007669"/>
    <property type="project" value="InterPro"/>
</dbReference>
<dbReference type="GO" id="GO:0016491">
    <property type="term" value="F:oxidoreductase activity"/>
    <property type="evidence" value="ECO:0000318"/>
    <property type="project" value="GO_Central"/>
</dbReference>
<dbReference type="GO" id="GO:0009695">
    <property type="term" value="P:jasmonic acid biosynthetic process"/>
    <property type="evidence" value="ECO:0000318"/>
    <property type="project" value="GO_Central"/>
</dbReference>
<dbReference type="GO" id="GO:0031408">
    <property type="term" value="P:oxylipin biosynthetic process"/>
    <property type="evidence" value="ECO:0000318"/>
    <property type="project" value="GO_Central"/>
</dbReference>
<dbReference type="CDD" id="cd02933">
    <property type="entry name" value="OYE_like_FMN"/>
    <property type="match status" value="1"/>
</dbReference>
<dbReference type="FunFam" id="3.20.20.70:FF:000073">
    <property type="entry name" value="12-oxophytodienoate reductase 3"/>
    <property type="match status" value="1"/>
</dbReference>
<dbReference type="Gene3D" id="3.20.20.70">
    <property type="entry name" value="Aldolase class I"/>
    <property type="match status" value="1"/>
</dbReference>
<dbReference type="InterPro" id="IPR013785">
    <property type="entry name" value="Aldolase_TIM"/>
</dbReference>
<dbReference type="InterPro" id="IPR001155">
    <property type="entry name" value="OxRdtase_FMN_N"/>
</dbReference>
<dbReference type="InterPro" id="IPR045247">
    <property type="entry name" value="Oye-like"/>
</dbReference>
<dbReference type="PANTHER" id="PTHR22893:SF44">
    <property type="entry name" value="12-OXOPHYTODIENOATE REDUCTASE 1"/>
    <property type="match status" value="1"/>
</dbReference>
<dbReference type="PANTHER" id="PTHR22893">
    <property type="entry name" value="NADH OXIDOREDUCTASE-RELATED"/>
    <property type="match status" value="1"/>
</dbReference>
<dbReference type="Pfam" id="PF00724">
    <property type="entry name" value="Oxidored_FMN"/>
    <property type="match status" value="1"/>
</dbReference>
<dbReference type="SUPFAM" id="SSF51395">
    <property type="entry name" value="FMN-linked oxidoreductases"/>
    <property type="match status" value="1"/>
</dbReference>
<feature type="chain" id="PRO_0000410708" description="Putative 12-oxophytodienoate reductase 2">
    <location>
        <begin position="1"/>
        <end position="376"/>
    </location>
</feature>
<feature type="active site" description="Proton donor" evidence="1">
    <location>
        <position position="183"/>
    </location>
</feature>
<feature type="binding site" evidence="1">
    <location>
        <begin position="31"/>
        <end position="33"/>
    </location>
    <ligand>
        <name>FMN</name>
        <dbReference type="ChEBI" id="CHEBI:58210"/>
    </ligand>
</feature>
<feature type="binding site" evidence="1">
    <location>
        <position position="64"/>
    </location>
    <ligand>
        <name>FMN</name>
        <dbReference type="ChEBI" id="CHEBI:58210"/>
    </ligand>
</feature>
<feature type="binding site" evidence="1">
    <location>
        <position position="106"/>
    </location>
    <ligand>
        <name>FMN</name>
        <dbReference type="ChEBI" id="CHEBI:58210"/>
    </ligand>
</feature>
<feature type="binding site" evidence="1">
    <location>
        <begin position="178"/>
        <end position="181"/>
    </location>
    <ligand>
        <name>substrate</name>
    </ligand>
</feature>
<feature type="binding site" evidence="1">
    <location>
        <position position="230"/>
    </location>
    <ligand>
        <name>FMN</name>
        <dbReference type="ChEBI" id="CHEBI:58210"/>
    </ligand>
</feature>
<feature type="binding site" evidence="1">
    <location>
        <position position="301"/>
    </location>
    <ligand>
        <name>FMN</name>
        <dbReference type="ChEBI" id="CHEBI:58210"/>
    </ligand>
</feature>
<feature type="binding site" evidence="1">
    <location>
        <begin position="322"/>
        <end position="323"/>
    </location>
    <ligand>
        <name>FMN</name>
        <dbReference type="ChEBI" id="CHEBI:58210"/>
    </ligand>
</feature>
<proteinExistence type="inferred from homology"/>
<accession>Q69TH4</accession>
<accession>A0A0P0WUE5</accession>
<organism>
    <name type="scientific">Oryza sativa subsp. japonica</name>
    <name type="common">Rice</name>
    <dbReference type="NCBI Taxonomy" id="39947"/>
    <lineage>
        <taxon>Eukaryota</taxon>
        <taxon>Viridiplantae</taxon>
        <taxon>Streptophyta</taxon>
        <taxon>Embryophyta</taxon>
        <taxon>Tracheophyta</taxon>
        <taxon>Spermatophyta</taxon>
        <taxon>Magnoliopsida</taxon>
        <taxon>Liliopsida</taxon>
        <taxon>Poales</taxon>
        <taxon>Poaceae</taxon>
        <taxon>BOP clade</taxon>
        <taxon>Oryzoideae</taxon>
        <taxon>Oryzeae</taxon>
        <taxon>Oryzinae</taxon>
        <taxon>Oryza</taxon>
        <taxon>Oryza sativa</taxon>
    </lineage>
</organism>
<reference key="1">
    <citation type="journal article" date="2005" name="Nature">
        <title>The map-based sequence of the rice genome.</title>
        <authorList>
            <consortium name="International rice genome sequencing project (IRGSP)"/>
        </authorList>
    </citation>
    <scope>NUCLEOTIDE SEQUENCE [LARGE SCALE GENOMIC DNA]</scope>
    <source>
        <strain>cv. Nipponbare</strain>
    </source>
</reference>
<reference key="2">
    <citation type="journal article" date="2008" name="Nucleic Acids Res.">
        <title>The rice annotation project database (RAP-DB): 2008 update.</title>
        <authorList>
            <consortium name="The rice annotation project (RAP)"/>
        </authorList>
    </citation>
    <scope>GENOME REANNOTATION</scope>
    <source>
        <strain>cv. Nipponbare</strain>
    </source>
</reference>
<reference key="3">
    <citation type="journal article" date="2013" name="Rice">
        <title>Improvement of the Oryza sativa Nipponbare reference genome using next generation sequence and optical map data.</title>
        <authorList>
            <person name="Kawahara Y."/>
            <person name="de la Bastide M."/>
            <person name="Hamilton J.P."/>
            <person name="Kanamori H."/>
            <person name="McCombie W.R."/>
            <person name="Ouyang S."/>
            <person name="Schwartz D.C."/>
            <person name="Tanaka T."/>
            <person name="Wu J."/>
            <person name="Zhou S."/>
            <person name="Childs K.L."/>
            <person name="Davidson R.M."/>
            <person name="Lin H."/>
            <person name="Quesada-Ocampo L."/>
            <person name="Vaillancourt B."/>
            <person name="Sakai H."/>
            <person name="Lee S.S."/>
            <person name="Kim J."/>
            <person name="Numa H."/>
            <person name="Itoh T."/>
            <person name="Buell C.R."/>
            <person name="Matsumoto T."/>
        </authorList>
    </citation>
    <scope>GENOME REANNOTATION</scope>
    <source>
        <strain>cv. Nipponbare</strain>
    </source>
</reference>
<reference key="4">
    <citation type="journal article" date="2005" name="PLoS Biol.">
        <title>The genomes of Oryza sativa: a history of duplications.</title>
        <authorList>
            <person name="Yu J."/>
            <person name="Wang J."/>
            <person name="Lin W."/>
            <person name="Li S."/>
            <person name="Li H."/>
            <person name="Zhou J."/>
            <person name="Ni P."/>
            <person name="Dong W."/>
            <person name="Hu S."/>
            <person name="Zeng C."/>
            <person name="Zhang J."/>
            <person name="Zhang Y."/>
            <person name="Li R."/>
            <person name="Xu Z."/>
            <person name="Li S."/>
            <person name="Li X."/>
            <person name="Zheng H."/>
            <person name="Cong L."/>
            <person name="Lin L."/>
            <person name="Yin J."/>
            <person name="Geng J."/>
            <person name="Li G."/>
            <person name="Shi J."/>
            <person name="Liu J."/>
            <person name="Lv H."/>
            <person name="Li J."/>
            <person name="Wang J."/>
            <person name="Deng Y."/>
            <person name="Ran L."/>
            <person name="Shi X."/>
            <person name="Wang X."/>
            <person name="Wu Q."/>
            <person name="Li C."/>
            <person name="Ren X."/>
            <person name="Wang J."/>
            <person name="Wang X."/>
            <person name="Li D."/>
            <person name="Liu D."/>
            <person name="Zhang X."/>
            <person name="Ji Z."/>
            <person name="Zhao W."/>
            <person name="Sun Y."/>
            <person name="Zhang Z."/>
            <person name="Bao J."/>
            <person name="Han Y."/>
            <person name="Dong L."/>
            <person name="Ji J."/>
            <person name="Chen P."/>
            <person name="Wu S."/>
            <person name="Liu J."/>
            <person name="Xiao Y."/>
            <person name="Bu D."/>
            <person name="Tan J."/>
            <person name="Yang L."/>
            <person name="Ye C."/>
            <person name="Zhang J."/>
            <person name="Xu J."/>
            <person name="Zhou Y."/>
            <person name="Yu Y."/>
            <person name="Zhang B."/>
            <person name="Zhuang S."/>
            <person name="Wei H."/>
            <person name="Liu B."/>
            <person name="Lei M."/>
            <person name="Yu H."/>
            <person name="Li Y."/>
            <person name="Xu H."/>
            <person name="Wei S."/>
            <person name="He X."/>
            <person name="Fang L."/>
            <person name="Zhang Z."/>
            <person name="Zhang Y."/>
            <person name="Huang X."/>
            <person name="Su Z."/>
            <person name="Tong W."/>
            <person name="Li J."/>
            <person name="Tong Z."/>
            <person name="Li S."/>
            <person name="Ye J."/>
            <person name="Wang L."/>
            <person name="Fang L."/>
            <person name="Lei T."/>
            <person name="Chen C.-S."/>
            <person name="Chen H.-C."/>
            <person name="Xu Z."/>
            <person name="Li H."/>
            <person name="Huang H."/>
            <person name="Zhang F."/>
            <person name="Xu H."/>
            <person name="Li N."/>
            <person name="Zhao C."/>
            <person name="Li S."/>
            <person name="Dong L."/>
            <person name="Huang Y."/>
            <person name="Li L."/>
            <person name="Xi Y."/>
            <person name="Qi Q."/>
            <person name="Li W."/>
            <person name="Zhang B."/>
            <person name="Hu W."/>
            <person name="Zhang Y."/>
            <person name="Tian X."/>
            <person name="Jiao Y."/>
            <person name="Liang X."/>
            <person name="Jin J."/>
            <person name="Gao L."/>
            <person name="Zheng W."/>
            <person name="Hao B."/>
            <person name="Liu S.-M."/>
            <person name="Wang W."/>
            <person name="Yuan L."/>
            <person name="Cao M."/>
            <person name="McDermott J."/>
            <person name="Samudrala R."/>
            <person name="Wang J."/>
            <person name="Wong G.K.-S."/>
            <person name="Yang H."/>
        </authorList>
    </citation>
    <scope>NUCLEOTIDE SEQUENCE [LARGE SCALE GENOMIC DNA]</scope>
    <source>
        <strain>cv. Nipponbare</strain>
    </source>
</reference>
<gene>
    <name type="primary">OPR2</name>
    <name type="ordered locus">Os06g0216200</name>
    <name type="ordered locus">LOC_Os06g11280</name>
    <name type="ORF">OsJ_20594</name>
    <name type="ORF">OSJNBb0024N18.12</name>
    <name type="ORF">P0537F07.34</name>
</gene>
<name>OPR2_ORYSJ</name>